<proteinExistence type="inferred from homology"/>
<protein>
    <recommendedName>
        <fullName evidence="1">Putative HTH-type transcriptional regulatory protein M164_1268</fullName>
    </recommendedName>
</protein>
<accession>C4KH08</accession>
<organism>
    <name type="scientific">Saccharolobus islandicus (strain M.16.4 / Kamchatka #3)</name>
    <name type="common">Sulfolobus islandicus</name>
    <dbReference type="NCBI Taxonomy" id="426118"/>
    <lineage>
        <taxon>Archaea</taxon>
        <taxon>Thermoproteota</taxon>
        <taxon>Thermoprotei</taxon>
        <taxon>Sulfolobales</taxon>
        <taxon>Sulfolobaceae</taxon>
        <taxon>Saccharolobus</taxon>
    </lineage>
</organism>
<name>Y1268_SACI6</name>
<evidence type="ECO:0000255" key="1">
    <source>
        <dbReference type="HAMAP-Rule" id="MF_00584"/>
    </source>
</evidence>
<feature type="chain" id="PRO_1000212143" description="Putative HTH-type transcriptional regulatory protein M164_1268">
    <location>
        <begin position="1"/>
        <end position="310"/>
    </location>
</feature>
<feature type="domain" description="HTH cro/C1-type" evidence="1">
    <location>
        <begin position="125"/>
        <end position="180"/>
    </location>
</feature>
<feature type="DNA-binding region" description="H-T-H motif" evidence="1">
    <location>
        <begin position="136"/>
        <end position="155"/>
    </location>
</feature>
<dbReference type="EMBL" id="CP001402">
    <property type="protein sequence ID" value="ACR41872.1"/>
    <property type="molecule type" value="Genomic_DNA"/>
</dbReference>
<dbReference type="RefSeq" id="WP_012711291.1">
    <property type="nucleotide sequence ID" value="NC_012726.1"/>
</dbReference>
<dbReference type="SMR" id="C4KH08"/>
<dbReference type="KEGG" id="sid:M164_1268"/>
<dbReference type="HOGENOM" id="CLU_075726_1_0_2"/>
<dbReference type="Proteomes" id="UP000001479">
    <property type="component" value="Chromosome"/>
</dbReference>
<dbReference type="GO" id="GO:0003677">
    <property type="term" value="F:DNA binding"/>
    <property type="evidence" value="ECO:0007669"/>
    <property type="project" value="UniProtKB-KW"/>
</dbReference>
<dbReference type="GO" id="GO:0003700">
    <property type="term" value="F:DNA-binding transcription factor activity"/>
    <property type="evidence" value="ECO:0007669"/>
    <property type="project" value="UniProtKB-UniRule"/>
</dbReference>
<dbReference type="CDD" id="cd00093">
    <property type="entry name" value="HTH_XRE"/>
    <property type="match status" value="1"/>
</dbReference>
<dbReference type="Gene3D" id="1.10.260.40">
    <property type="entry name" value="lambda repressor-like DNA-binding domains"/>
    <property type="match status" value="1"/>
</dbReference>
<dbReference type="HAMAP" id="MF_00584">
    <property type="entry name" value="HTH_type_cro_C1"/>
    <property type="match status" value="1"/>
</dbReference>
<dbReference type="InterPro" id="IPR020886">
    <property type="entry name" value="Arc_TR_HTH"/>
</dbReference>
<dbReference type="InterPro" id="IPR001387">
    <property type="entry name" value="Cro/C1-type_HTH"/>
</dbReference>
<dbReference type="InterPro" id="IPR010982">
    <property type="entry name" value="Lambda_DNA-bd_dom_sf"/>
</dbReference>
<dbReference type="Pfam" id="PF01381">
    <property type="entry name" value="HTH_3"/>
    <property type="match status" value="1"/>
</dbReference>
<dbReference type="SMART" id="SM00530">
    <property type="entry name" value="HTH_XRE"/>
    <property type="match status" value="1"/>
</dbReference>
<dbReference type="SUPFAM" id="SSF47413">
    <property type="entry name" value="lambda repressor-like DNA-binding domains"/>
    <property type="match status" value="1"/>
</dbReference>
<dbReference type="PROSITE" id="PS50943">
    <property type="entry name" value="HTH_CROC1"/>
    <property type="match status" value="1"/>
</dbReference>
<gene>
    <name type="ordered locus">M164_1268</name>
</gene>
<keyword id="KW-0238">DNA-binding</keyword>
<keyword id="KW-0804">Transcription</keyword>
<keyword id="KW-0805">Transcription regulation</keyword>
<reference key="1">
    <citation type="journal article" date="2009" name="Proc. Natl. Acad. Sci. U.S.A.">
        <title>Biogeography of the Sulfolobus islandicus pan-genome.</title>
        <authorList>
            <person name="Reno M.L."/>
            <person name="Held N.L."/>
            <person name="Fields C.J."/>
            <person name="Burke P.V."/>
            <person name="Whitaker R.J."/>
        </authorList>
    </citation>
    <scope>NUCLEOTIDE SEQUENCE [LARGE SCALE GENOMIC DNA]</scope>
    <source>
        <strain>M.16.4 / Kamchatka #3</strain>
    </source>
</reference>
<sequence length="310" mass="35558">MSKKIINEVIDILEDKKYTYTMIEYPEHNRKSVDIVLNSKEPTLIRVSEDKVTKEEISDLKKIAVSTLTASLVVTNEEEEDIVSVKADNVFAVSPEGFKKVINGEKIFLYRTRGGIFIKIRNYILKHKREEMGYSIGDVAKFLGVSRKAIYDYEKGDSDVSLEVAEKLIDLFGDDIIGDVIWDSIKGKKEVIEEDITEFSPESFKSKLIYKLKENGLNILSLKLTAADLIVKDNENNRYLVTIENKDYNKSMKKFYEAKKLASYTKSELLIIIRTSKMLKECEDLGYKTYEENDIHSLIDEIKGSNGRQS</sequence>